<reference key="1">
    <citation type="journal article" date="1976" name="Bioorg. Khim.">
        <title>Primary structure of the corticotropin of whalebone whales, finbacks (Balaenoptera physalus).</title>
        <authorList>
            <person name="Pankov Y.A."/>
            <person name="Nikolaeva O.P."/>
            <person name="Elisarova G.P."/>
        </authorList>
    </citation>
    <scope>PROTEIN SEQUENCE</scope>
</reference>
<gene>
    <name type="primary">POMC</name>
</gene>
<dbReference type="PIR" id="A01458">
    <property type="entry name" value="A01458"/>
</dbReference>
<dbReference type="SMR" id="P68001"/>
<dbReference type="GO" id="GO:0005615">
    <property type="term" value="C:extracellular space"/>
    <property type="evidence" value="ECO:0007669"/>
    <property type="project" value="TreeGrafter"/>
</dbReference>
<dbReference type="GO" id="GO:0030141">
    <property type="term" value="C:secretory granule"/>
    <property type="evidence" value="ECO:0007669"/>
    <property type="project" value="TreeGrafter"/>
</dbReference>
<dbReference type="GO" id="GO:0001664">
    <property type="term" value="F:G protein-coupled receptor binding"/>
    <property type="evidence" value="ECO:0007669"/>
    <property type="project" value="TreeGrafter"/>
</dbReference>
<dbReference type="GO" id="GO:0005179">
    <property type="term" value="F:hormone activity"/>
    <property type="evidence" value="ECO:0007669"/>
    <property type="project" value="UniProtKB-KW"/>
</dbReference>
<dbReference type="GO" id="GO:2000852">
    <property type="term" value="P:regulation of corticosterone secretion"/>
    <property type="evidence" value="ECO:0007669"/>
    <property type="project" value="TreeGrafter"/>
</dbReference>
<dbReference type="InterPro" id="IPR013531">
    <property type="entry name" value="Mcrtin_ACTH_cent"/>
</dbReference>
<dbReference type="InterPro" id="IPR001941">
    <property type="entry name" value="PMOC"/>
</dbReference>
<dbReference type="InterPro" id="IPR050878">
    <property type="entry name" value="POMC-derived_peptides"/>
</dbReference>
<dbReference type="PANTHER" id="PTHR11416">
    <property type="entry name" value="PRO-OPIOMELANOCORTIN"/>
    <property type="match status" value="1"/>
</dbReference>
<dbReference type="PANTHER" id="PTHR11416:SF7">
    <property type="entry name" value="PRO-OPIOMELANOCORTIN"/>
    <property type="match status" value="1"/>
</dbReference>
<dbReference type="Pfam" id="PF00976">
    <property type="entry name" value="ACTH_domain"/>
    <property type="match status" value="1"/>
</dbReference>
<dbReference type="PRINTS" id="PR00383">
    <property type="entry name" value="MELANOCORTIN"/>
</dbReference>
<dbReference type="SMART" id="SM01363">
    <property type="entry name" value="ACTH_domain"/>
    <property type="match status" value="1"/>
</dbReference>
<organism>
    <name type="scientific">Balaenoptera physalus</name>
    <name type="common">Fin whale</name>
    <name type="synonym">Balaena physalus</name>
    <dbReference type="NCBI Taxonomy" id="9770"/>
    <lineage>
        <taxon>Eukaryota</taxon>
        <taxon>Metazoa</taxon>
        <taxon>Chordata</taxon>
        <taxon>Craniata</taxon>
        <taxon>Vertebrata</taxon>
        <taxon>Euteleostomi</taxon>
        <taxon>Mammalia</taxon>
        <taxon>Eutheria</taxon>
        <taxon>Laurasiatheria</taxon>
        <taxon>Artiodactyla</taxon>
        <taxon>Whippomorpha</taxon>
        <taxon>Cetacea</taxon>
        <taxon>Mysticeti</taxon>
        <taxon>Balaenopteridae</taxon>
        <taxon>Balaenoptera</taxon>
    </lineage>
</organism>
<evidence type="ECO:0000250" key="1">
    <source>
        <dbReference type="UniProtKB" id="P01189"/>
    </source>
</evidence>
<evidence type="ECO:0000250" key="2">
    <source>
        <dbReference type="UniProtKB" id="P01190"/>
    </source>
</evidence>
<evidence type="ECO:0000250" key="3">
    <source>
        <dbReference type="UniProtKB" id="P01191"/>
    </source>
</evidence>
<evidence type="ECO:0000250" key="4">
    <source>
        <dbReference type="UniProtKB" id="P01193"/>
    </source>
</evidence>
<evidence type="ECO:0000305" key="5"/>
<feature type="peptide" id="PRO_0000024940" description="Corticotropin">
    <location>
        <begin position="1"/>
        <end position="39"/>
    </location>
</feature>
<feature type="peptide" id="PRO_0000024941" description="Melanocyte-stimulating hormone alpha">
    <location>
        <begin position="1"/>
        <end position="13"/>
    </location>
</feature>
<feature type="peptide" id="PRO_0000024942" description="Corticotropin-like intermediary peptide">
    <location>
        <begin position="19"/>
        <end position="39"/>
    </location>
</feature>
<feature type="modified residue" description="N-acetylserine" evidence="3">
    <location>
        <position position="1"/>
    </location>
</feature>
<feature type="modified residue" description="Valine amide" evidence="2">
    <location>
        <position position="13"/>
    </location>
</feature>
<feature type="modified residue" description="Phosphoserine" evidence="1">
    <location>
        <position position="31"/>
    </location>
</feature>
<feature type="non-terminal residue">
    <location>
        <position position="1"/>
    </location>
</feature>
<feature type="non-terminal residue">
    <location>
        <position position="39"/>
    </location>
</feature>
<proteinExistence type="evidence at protein level"/>
<accession>P68001</accession>
<accession>P01195</accession>
<comment type="function">
    <text>Precursor protein for pituitary hormones that regulate stress and environmental adaptation.</text>
</comment>
<comment type="function">
    <molecule>Corticotropin</molecule>
    <text>Stimulates the adrenal glands to release cortisol.</text>
</comment>
<comment type="function">
    <molecule>Melanocyte-stimulating hormone alpha</molecule>
    <text>Anorexigenic peptide. Increases the pigmentation of skin by increasing melanin production in melanocytes.</text>
</comment>
<comment type="subcellular location">
    <subcellularLocation>
        <location evidence="4">Secreted</location>
    </subcellularLocation>
</comment>
<comment type="similarity">
    <text evidence="5">Belongs to the POMC family.</text>
</comment>
<name>COLI_BALPH</name>
<sequence>SYSMEHFRWGKPVGKKRRPVKVYPNGAEDESAEAFPLEF</sequence>
<protein>
    <recommendedName>
        <fullName>Pro-opiomelanocortin</fullName>
        <shortName>POMC</shortName>
    </recommendedName>
    <alternativeName>
        <fullName>Corticotropin-lipotropin</fullName>
    </alternativeName>
    <component>
        <recommendedName>
            <fullName>Corticotropin</fullName>
        </recommendedName>
        <alternativeName>
            <fullName>Adrenocorticotropic hormone</fullName>
            <shortName>ACTH</shortName>
        </alternativeName>
    </component>
    <component>
        <recommendedName>
            <fullName>Melanocyte-stimulating hormone alpha</fullName>
            <shortName>Alpha-MSH</shortName>
        </recommendedName>
        <alternativeName>
            <fullName>Melanotropin alpha</fullName>
        </alternativeName>
    </component>
    <component>
        <recommendedName>
            <fullName>Corticotropin-like intermediary peptide</fullName>
            <shortName>CLIP</shortName>
        </recommendedName>
    </component>
</protein>
<keyword id="KW-0007">Acetylation</keyword>
<keyword id="KW-0027">Amidation</keyword>
<keyword id="KW-0165">Cleavage on pair of basic residues</keyword>
<keyword id="KW-0903">Direct protein sequencing</keyword>
<keyword id="KW-0372">Hormone</keyword>
<keyword id="KW-0597">Phosphoprotein</keyword>
<keyword id="KW-0964">Secreted</keyword>